<sequence>MKNKYISKLLVGAATITLATMISNGEAKASENTQQTSTKHQTTQNNYVTDQQKAFYQVLHLKGITEEQRNQYIKTLREHPERAQEVFSESLKDSKNPDRRVAQQNAFYNVLKNDNLTEQEKNNYIAQIKENPDRSQQVWVESVQSSKAKERQNIENADKAIKDFQDNKAPHDKSAAYEANSKLPKDLRDKNNRFVEKVSIEKAIVRHDERVKSANDAISKLNEKDSIENRRLAQREVNKAPMDVKEHLQKQLDALVAQKDAEKKVAPKVEAPQIQSPQIEKPKAESPKVEVPQSKLLGYYQSLKDSFNYGYKYLTDTYKSYKEKYDTAKYYYNTYYKYKGAIDQTVLTVLGSGSKSYIQPLKVDDKNGYLAKSYAQVRNYVTESINTGKVLYTFYQNPTLVKTAIKAQETASSIKNTLSNLLSFWK</sequence>
<organism>
    <name type="scientific">Staphylococcus aureus (strain Mu3 / ATCC 700698)</name>
    <dbReference type="NCBI Taxonomy" id="418127"/>
    <lineage>
        <taxon>Bacteria</taxon>
        <taxon>Bacillati</taxon>
        <taxon>Bacillota</taxon>
        <taxon>Bacilli</taxon>
        <taxon>Bacillales</taxon>
        <taxon>Staphylococcaceae</taxon>
        <taxon>Staphylococcus</taxon>
    </lineage>
</organism>
<proteinExistence type="inferred from homology"/>
<reference key="1">
    <citation type="journal article" date="2008" name="Antimicrob. Agents Chemother.">
        <title>Mutated response regulator graR is responsible for phenotypic conversion of Staphylococcus aureus from heterogeneous vancomycin-intermediate resistance to vancomycin-intermediate resistance.</title>
        <authorList>
            <person name="Neoh H.-M."/>
            <person name="Cui L."/>
            <person name="Yuzawa H."/>
            <person name="Takeuchi F."/>
            <person name="Matsuo M."/>
            <person name="Hiramatsu K."/>
        </authorList>
    </citation>
    <scope>NUCLEOTIDE SEQUENCE [LARGE SCALE GENOMIC DNA]</scope>
    <source>
        <strain>Mu3 / ATCC 700698</strain>
    </source>
</reference>
<name>SBI_STAA1</name>
<keyword id="KW-1003">Cell membrane</keyword>
<keyword id="KW-0390">IgG-binding protein</keyword>
<keyword id="KW-0472">Membrane</keyword>
<keyword id="KW-0677">Repeat</keyword>
<keyword id="KW-0964">Secreted</keyword>
<keyword id="KW-0732">Signal</keyword>
<keyword id="KW-0843">Virulence</keyword>
<accession>A7X659</accession>
<feature type="signal peptide" evidence="3">
    <location>
        <begin position="1"/>
        <end position="29"/>
    </location>
</feature>
<feature type="chain" id="PRO_0000361890" description="Immunoglobulin-binding protein Sbi">
    <location>
        <begin position="30"/>
        <end position="426"/>
    </location>
</feature>
<feature type="repeat" description="B 1">
    <location>
        <begin position="43"/>
        <end position="94"/>
    </location>
</feature>
<feature type="repeat" description="B 2">
    <location>
        <begin position="95"/>
        <end position="148"/>
    </location>
</feature>
<feature type="repeat" description="2-1">
    <location>
        <begin position="267"/>
        <end position="271"/>
    </location>
</feature>
<feature type="repeat" description="2-2">
    <location>
        <begin position="272"/>
        <end position="276"/>
    </location>
</feature>
<feature type="repeat" description="2-3">
    <location>
        <begin position="277"/>
        <end position="281"/>
    </location>
</feature>
<feature type="repeat" description="2-4">
    <location>
        <begin position="282"/>
        <end position="286"/>
    </location>
</feature>
<feature type="repeat" description="2-5">
    <location>
        <begin position="287"/>
        <end position="291"/>
    </location>
</feature>
<feature type="repeat" description="2-6">
    <location>
        <begin position="292"/>
        <end position="296"/>
    </location>
</feature>
<feature type="region of interest" description="Sbi-I">
    <location>
        <begin position="42"/>
        <end position="94"/>
    </location>
</feature>
<feature type="region of interest" description="Sbi-II">
    <location>
        <begin position="103"/>
        <end position="153"/>
    </location>
</feature>
<feature type="region of interest" description="Sbi-III">
    <location>
        <begin position="154"/>
        <end position="195"/>
    </location>
</feature>
<feature type="region of interest" description="Sbi-IV">
    <location>
        <begin position="196"/>
        <end position="253"/>
    </location>
</feature>
<feature type="region of interest" description="Disordered" evidence="4">
    <location>
        <begin position="266"/>
        <end position="287"/>
    </location>
</feature>
<feature type="region of interest" description="6 X 5 AA tandem repeat of P-[KQ]-[AISV]-[EKQ]-[AKLSV]">
    <location>
        <begin position="267"/>
        <end position="296"/>
    </location>
</feature>
<protein>
    <recommendedName>
        <fullName>Immunoglobulin-binding protein Sbi</fullName>
    </recommendedName>
</protein>
<comment type="function">
    <text evidence="1">Plays a role in the inhibition of both the innate and adaptive immune responses. Possesses two N-terminal domains that bind the Fc region of IgG and two domains that form a tripartite complex with complement factors C3b and CFH. By recruiting CFH and C3b, the secreted form acts as a potent complement inhibitor of the alternative pathway-mediated lysis.</text>
</comment>
<comment type="subunit">
    <text evidence="1 2">Interacts (via sbi-I and sbi-II domains) with the Fc region of mammalian immunoglobulin G (IgG) proteins. Interacts (via sbi-III and sbi-IV domains) with host complement C3. Interacts (via sbi-III and sbi-IV domains) with host CFH (By similarity). Interacts (via sbi-IV domain) with beta-2-glycoprotein 1/APOH (By similarity).</text>
</comment>
<comment type="subcellular location">
    <subcellularLocation>
        <location evidence="1">Secreted</location>
    </subcellularLocation>
    <subcellularLocation>
        <location evidence="1">Cell membrane</location>
    </subcellularLocation>
    <text evidence="1">Occurs both extracellularly and associated with the cytoplasmic membrane where only the domains I and II are exposed to the extracellular media. Membrane association occurs via binding to lipoteichoic acid.</text>
</comment>
<comment type="domain">
    <text evidence="1">Sbi-I and sbi-II domains provide protection only when anchored to the cell surface, whereas only the secreted sbi-III and sbi-IV domains are biologically active.</text>
</comment>
<comment type="similarity">
    <text evidence="5">Belongs to the immunoglobulin-binding protein Sbi family.</text>
</comment>
<evidence type="ECO:0000250" key="1">
    <source>
        <dbReference type="UniProtKB" id="A6QJQ7"/>
    </source>
</evidence>
<evidence type="ECO:0000250" key="2">
    <source>
        <dbReference type="UniProtKB" id="Q931F4"/>
    </source>
</evidence>
<evidence type="ECO:0000255" key="3"/>
<evidence type="ECO:0000256" key="4">
    <source>
        <dbReference type="SAM" id="MobiDB-lite"/>
    </source>
</evidence>
<evidence type="ECO:0000305" key="5"/>
<gene>
    <name type="primary">sbi</name>
    <name type="ordered locus">SAHV_2402</name>
</gene>
<dbReference type="EMBL" id="AP009324">
    <property type="protein sequence ID" value="BAF79285.1"/>
    <property type="molecule type" value="Genomic_DNA"/>
</dbReference>
<dbReference type="RefSeq" id="WP_000792562.1">
    <property type="nucleotide sequence ID" value="NC_009782.1"/>
</dbReference>
<dbReference type="SMR" id="A7X659"/>
<dbReference type="KEGG" id="saw:SAHV_2402"/>
<dbReference type="HOGENOM" id="CLU_051343_0_0_9"/>
<dbReference type="PRO" id="PR:A7X659"/>
<dbReference type="GO" id="GO:0005576">
    <property type="term" value="C:extracellular region"/>
    <property type="evidence" value="ECO:0007669"/>
    <property type="project" value="UniProtKB-SubCell"/>
</dbReference>
<dbReference type="GO" id="GO:0005886">
    <property type="term" value="C:plasma membrane"/>
    <property type="evidence" value="ECO:0007669"/>
    <property type="project" value="UniProtKB-SubCell"/>
</dbReference>
<dbReference type="GO" id="GO:0019864">
    <property type="term" value="F:IgG binding"/>
    <property type="evidence" value="ECO:0007669"/>
    <property type="project" value="UniProtKB-KW"/>
</dbReference>
<dbReference type="Gene3D" id="1.20.5.420">
    <property type="entry name" value="Immunoglobulin FC, subunit C"/>
    <property type="match status" value="2"/>
</dbReference>
<dbReference type="Gene3D" id="1.10.10.1270">
    <property type="entry name" value="Sbi, C3 binding domain IV"/>
    <property type="match status" value="1"/>
</dbReference>
<dbReference type="InterPro" id="IPR009063">
    <property type="entry name" value="Ig/albumin-bd_sf"/>
</dbReference>
<dbReference type="InterPro" id="IPR021657">
    <property type="entry name" value="IgG-binding_Sbi_dom_IV"/>
</dbReference>
<dbReference type="InterPro" id="IPR003132">
    <property type="entry name" value="Protein_A_Ig-bd"/>
</dbReference>
<dbReference type="InterPro" id="IPR041909">
    <property type="entry name" value="Sbi_C3_db_domIV"/>
</dbReference>
<dbReference type="Pfam" id="PF02216">
    <property type="entry name" value="B"/>
    <property type="match status" value="2"/>
</dbReference>
<dbReference type="Pfam" id="PF11621">
    <property type="entry name" value="Sbi-IV"/>
    <property type="match status" value="1"/>
</dbReference>
<dbReference type="SUPFAM" id="SSF46997">
    <property type="entry name" value="Bacterial immunoglobulin/albumin-binding domains"/>
    <property type="match status" value="2"/>
</dbReference>